<gene>
    <name evidence="3 5" type="primary">okrAIR</name>
</gene>
<organism>
    <name type="scientific">Oceanobacter kriegii</name>
    <name type="common">Oceanospirillum kriegii</name>
    <dbReference type="NCBI Taxonomy" id="64972"/>
    <lineage>
        <taxon>Bacteria</taxon>
        <taxon>Pseudomonadati</taxon>
        <taxon>Pseudomonadota</taxon>
        <taxon>Gammaproteobacteria</taxon>
        <taxon>Oceanospirillales</taxon>
        <taxon>Oceanospirillaceae</taxon>
        <taxon>Oceanobacter</taxon>
    </lineage>
</organism>
<protein>
    <recommendedName>
        <fullName evidence="4">Type II restriction enzyme OkrAI</fullName>
        <shortName evidence="4">R.OkrAI</shortName>
        <ecNumber evidence="2">3.1.21.4</ecNumber>
    </recommendedName>
    <alternativeName>
        <fullName evidence="4">Endonuclease OkrAI</fullName>
    </alternativeName>
    <alternativeName>
        <fullName evidence="4">Type-2 restriction enzyme OkrAI</fullName>
    </alternativeName>
</protein>
<evidence type="ECO:0000250" key="1">
    <source>
        <dbReference type="UniProtKB" id="P23940"/>
    </source>
</evidence>
<evidence type="ECO:0000269" key="2">
    <source>
    </source>
</evidence>
<evidence type="ECO:0000303" key="3">
    <source>
    </source>
</evidence>
<evidence type="ECO:0000305" key="4">
    <source>
    </source>
</evidence>
<evidence type="ECO:0000312" key="5">
    <source>
        <dbReference type="EMBL" id="ADO14692.1"/>
    </source>
</evidence>
<evidence type="ECO:0007744" key="6">
    <source>
        <dbReference type="PDB" id="3ODH"/>
    </source>
</evidence>
<reference key="1">
    <citation type="journal article" date="2011" name="Nucleic Acids Res.">
        <title>Asymmetric DNA recognition by the OkrAI endonuclease, an isoschizomer of BamHI.</title>
        <authorList>
            <person name="Vanamee E.S."/>
            <person name="Viadiu H."/>
            <person name="Chan S.H."/>
            <person name="Ummat A."/>
            <person name="Hartline A.M."/>
            <person name="Xu S.Y."/>
            <person name="Aggarwal A.K."/>
        </authorList>
    </citation>
    <scope>NUCLEOTIDE SEQUENCE [GENOMIC DNA]</scope>
    <scope>X-RAY CRYSTALLOGRAPHY (2.30 ANGSTROMS) IN COMPLEX WITH DNA SEQUENCE TATGGATCCATA AND CA(2+)</scope>
    <scope>FUNCTION</scope>
    <scope>CATALYTIC ACTIVITY</scope>
    <scope>COFACTOR</scope>
    <scope>SUBUNIT</scope>
    <source>
        <strain>NEB 972</strain>
    </source>
</reference>
<sequence length="194" mass="21843">MKIKRIEVLINNGSVPGIPMILNEIQDAIKTVSWPEGNNSFVINPVRKGNGVKPIKNSCMRHLHQKGWALEHPVRIKAEMRPGPLDAVKMIGGKAFALEWETGNISSSHRAINKMVMGMLERVIIGGVLILPSRDMYNYLTDRVGNFRELEPYFSVWRQFNLKDAYLAIVEIEHDSVDAQVSLIPKGTDGRAIR</sequence>
<proteinExistence type="evidence at protein level"/>
<name>T2OK1_OCEKR</name>
<feature type="chain" id="PRO_0000459752" description="Type II restriction enzyme OkrAI">
    <location>
        <begin position="1"/>
        <end position="194"/>
    </location>
</feature>
<feature type="active site" description="Proton acceptor" evidence="1">
    <location>
        <position position="101"/>
    </location>
</feature>
<feature type="binding site" evidence="4 6">
    <location>
        <position position="71"/>
    </location>
    <ligand>
        <name>Mg(2+)</name>
        <dbReference type="ChEBI" id="CHEBI:18420"/>
        <label>2</label>
    </ligand>
</feature>
<feature type="binding site" evidence="4 6">
    <location>
        <position position="86"/>
    </location>
    <ligand>
        <name>Mg(2+)</name>
        <dbReference type="ChEBI" id="CHEBI:18420"/>
        <label>1</label>
    </ligand>
</feature>
<feature type="binding site" evidence="4 6">
    <location>
        <position position="86"/>
    </location>
    <ligand>
        <name>Mg(2+)</name>
        <dbReference type="ChEBI" id="CHEBI:18420"/>
        <label>2</label>
    </ligand>
</feature>
<feature type="binding site" evidence="4 6">
    <location>
        <position position="100"/>
    </location>
    <ligand>
        <name>Mg(2+)</name>
        <dbReference type="ChEBI" id="CHEBI:18420"/>
        <label>1</label>
    </ligand>
</feature>
<dbReference type="EC" id="3.1.21.4" evidence="2"/>
<dbReference type="EMBL" id="HQ323645">
    <property type="protein sequence ID" value="ADO14692.1"/>
    <property type="molecule type" value="Genomic_DNA"/>
</dbReference>
<dbReference type="PDB" id="3ODH">
    <property type="method" value="X-ray"/>
    <property type="resolution" value="2.30 A"/>
    <property type="chains" value="A/B/E/F=1-194"/>
</dbReference>
<dbReference type="PDBsum" id="3ODH"/>
<dbReference type="SMR" id="E2JKI3"/>
<dbReference type="GO" id="GO:0003677">
    <property type="term" value="F:DNA binding"/>
    <property type="evidence" value="ECO:0007669"/>
    <property type="project" value="InterPro"/>
</dbReference>
<dbReference type="GO" id="GO:0000287">
    <property type="term" value="F:magnesium ion binding"/>
    <property type="evidence" value="ECO:0007669"/>
    <property type="project" value="InterPro"/>
</dbReference>
<dbReference type="GO" id="GO:0009036">
    <property type="term" value="F:type II site-specific deoxyribonuclease activity"/>
    <property type="evidence" value="ECO:0007669"/>
    <property type="project" value="InterPro"/>
</dbReference>
<dbReference type="GO" id="GO:0009307">
    <property type="term" value="P:DNA restriction-modification system"/>
    <property type="evidence" value="ECO:0007669"/>
    <property type="project" value="UniProtKB-KW"/>
</dbReference>
<dbReference type="CDD" id="cd00942">
    <property type="entry name" value="BamHI-like"/>
    <property type="match status" value="1"/>
</dbReference>
<dbReference type="Gene3D" id="3.40.91.20">
    <property type="match status" value="1"/>
</dbReference>
<dbReference type="InterPro" id="IPR011338">
    <property type="entry name" value="BamHI/BglII/BstY"/>
</dbReference>
<dbReference type="InterPro" id="IPR011335">
    <property type="entry name" value="Restrct_endonuc-II-like"/>
</dbReference>
<dbReference type="InterPro" id="IPR004194">
    <property type="entry name" value="Restrct_endonuc_II_BamHI"/>
</dbReference>
<dbReference type="Pfam" id="PF02923">
    <property type="entry name" value="BamHI"/>
    <property type="match status" value="1"/>
</dbReference>
<dbReference type="PIRSF" id="PIRSF009309">
    <property type="entry name" value="Restrict_endonuc_II_BamHI"/>
    <property type="match status" value="1"/>
</dbReference>
<dbReference type="SUPFAM" id="SSF52980">
    <property type="entry name" value="Restriction endonuclease-like"/>
    <property type="match status" value="1"/>
</dbReference>
<comment type="function">
    <text evidence="2">A P subtype restriction enzyme that recognizes the double-stranded sequence 5'-GGATCC-3' and cleaves after G-1.</text>
</comment>
<comment type="catalytic activity">
    <reaction evidence="2">
        <text>Endonucleolytic cleavage of DNA to give specific double-stranded fragments with terminal 5'-phosphates.</text>
        <dbReference type="EC" id="3.1.21.4"/>
    </reaction>
</comment>
<comment type="cofactor">
    <cofactor evidence="2">
        <name>Mg(2+)</name>
        <dbReference type="ChEBI" id="CHEBI:18420"/>
    </cofactor>
    <text evidence="4">Binds 2 magnesium ions per subunit.</text>
</comment>
<comment type="subunit">
    <text evidence="4">Homodimer.</text>
</comment>
<accession>E2JKI3</accession>
<keyword id="KW-0002">3D-structure</keyword>
<keyword id="KW-0255">Endonuclease</keyword>
<keyword id="KW-0378">Hydrolase</keyword>
<keyword id="KW-0460">Magnesium</keyword>
<keyword id="KW-0479">Metal-binding</keyword>
<keyword id="KW-0540">Nuclease</keyword>
<keyword id="KW-0680">Restriction system</keyword>